<dbReference type="EC" id="2.4.2.53" evidence="1"/>
<dbReference type="EMBL" id="CP000026">
    <property type="protein sequence ID" value="AAV76567.1"/>
    <property type="molecule type" value="Genomic_DNA"/>
</dbReference>
<dbReference type="RefSeq" id="WP_000458888.1">
    <property type="nucleotide sequence ID" value="NC_006511.1"/>
</dbReference>
<dbReference type="SMR" id="Q5PNA5"/>
<dbReference type="CAZy" id="GT2">
    <property type="family name" value="Glycosyltransferase Family 2"/>
</dbReference>
<dbReference type="KEGG" id="spt:SPA0565"/>
<dbReference type="HOGENOM" id="CLU_033536_0_0_6"/>
<dbReference type="UniPathway" id="UPA00030"/>
<dbReference type="UniPathway" id="UPA00036">
    <property type="reaction ID" value="UER00495"/>
</dbReference>
<dbReference type="Proteomes" id="UP000008185">
    <property type="component" value="Chromosome"/>
</dbReference>
<dbReference type="GO" id="GO:0005886">
    <property type="term" value="C:plasma membrane"/>
    <property type="evidence" value="ECO:0007669"/>
    <property type="project" value="UniProtKB-SubCell"/>
</dbReference>
<dbReference type="GO" id="GO:0016780">
    <property type="term" value="F:phosphotransferase activity, for other substituted phosphate groups"/>
    <property type="evidence" value="ECO:0007669"/>
    <property type="project" value="UniProtKB-UniRule"/>
</dbReference>
<dbReference type="GO" id="GO:0099621">
    <property type="term" value="F:undecaprenyl-phosphate 4-deoxy-4-formamido-L-arabinose transferase activity"/>
    <property type="evidence" value="ECO:0007669"/>
    <property type="project" value="UniProtKB-EC"/>
</dbReference>
<dbReference type="GO" id="GO:0036108">
    <property type="term" value="P:4-amino-4-deoxy-alpha-L-arabinopyranosyl undecaprenyl phosphate biosynthetic process"/>
    <property type="evidence" value="ECO:0007669"/>
    <property type="project" value="UniProtKB-UniRule"/>
</dbReference>
<dbReference type="GO" id="GO:0009245">
    <property type="term" value="P:lipid A biosynthetic process"/>
    <property type="evidence" value="ECO:0007669"/>
    <property type="project" value="UniProtKB-UniRule"/>
</dbReference>
<dbReference type="GO" id="GO:0009103">
    <property type="term" value="P:lipopolysaccharide biosynthetic process"/>
    <property type="evidence" value="ECO:0007669"/>
    <property type="project" value="UniProtKB-UniRule"/>
</dbReference>
<dbReference type="GO" id="GO:0046677">
    <property type="term" value="P:response to antibiotic"/>
    <property type="evidence" value="ECO:0007669"/>
    <property type="project" value="UniProtKB-KW"/>
</dbReference>
<dbReference type="CDD" id="cd04187">
    <property type="entry name" value="DPM1_like_bac"/>
    <property type="match status" value="1"/>
</dbReference>
<dbReference type="FunFam" id="3.90.550.10:FF:000019">
    <property type="entry name" value="Undecaprenyl-phosphate 4-deoxy-4-formamido-L-arabinose transferase"/>
    <property type="match status" value="1"/>
</dbReference>
<dbReference type="Gene3D" id="3.90.550.10">
    <property type="entry name" value="Spore Coat Polysaccharide Biosynthesis Protein SpsA, Chain A"/>
    <property type="match status" value="1"/>
</dbReference>
<dbReference type="HAMAP" id="MF_01164">
    <property type="entry name" value="ArnC_transfer"/>
    <property type="match status" value="1"/>
</dbReference>
<dbReference type="InterPro" id="IPR022857">
    <property type="entry name" value="ArnC_tfrase"/>
</dbReference>
<dbReference type="InterPro" id="IPR001173">
    <property type="entry name" value="Glyco_trans_2-like"/>
</dbReference>
<dbReference type="InterPro" id="IPR050256">
    <property type="entry name" value="Glycosyltransferase_2"/>
</dbReference>
<dbReference type="InterPro" id="IPR029044">
    <property type="entry name" value="Nucleotide-diphossugar_trans"/>
</dbReference>
<dbReference type="NCBIfam" id="NF007986">
    <property type="entry name" value="PRK10714.1"/>
    <property type="match status" value="1"/>
</dbReference>
<dbReference type="PANTHER" id="PTHR48090:SF3">
    <property type="entry name" value="UNDECAPRENYL-PHOSPHATE 4-DEOXY-4-FORMAMIDO-L-ARABINOSE TRANSFERASE"/>
    <property type="match status" value="1"/>
</dbReference>
<dbReference type="PANTHER" id="PTHR48090">
    <property type="entry name" value="UNDECAPRENYL-PHOSPHATE 4-DEOXY-4-FORMAMIDO-L-ARABINOSE TRANSFERASE-RELATED"/>
    <property type="match status" value="1"/>
</dbReference>
<dbReference type="Pfam" id="PF00535">
    <property type="entry name" value="Glycos_transf_2"/>
    <property type="match status" value="1"/>
</dbReference>
<dbReference type="SUPFAM" id="SSF53448">
    <property type="entry name" value="Nucleotide-diphospho-sugar transferases"/>
    <property type="match status" value="1"/>
</dbReference>
<feature type="chain" id="PRO_0000059201" description="Undecaprenyl-phosphate 4-deoxy-4-formamido-L-arabinose transferase">
    <location>
        <begin position="1"/>
        <end position="327"/>
    </location>
</feature>
<feature type="topological domain" description="Cytoplasmic" evidence="1">
    <location>
        <begin position="1"/>
        <end position="235"/>
    </location>
</feature>
<feature type="transmembrane region" description="Helical" evidence="1">
    <location>
        <begin position="236"/>
        <end position="256"/>
    </location>
</feature>
<feature type="topological domain" description="Periplasmic" evidence="1">
    <location>
        <begin position="257"/>
        <end position="269"/>
    </location>
</feature>
<feature type="transmembrane region" description="Helical" evidence="1">
    <location>
        <begin position="270"/>
        <end position="290"/>
    </location>
</feature>
<feature type="topological domain" description="Cytoplasmic" evidence="1">
    <location>
        <begin position="291"/>
        <end position="327"/>
    </location>
</feature>
<proteinExistence type="inferred from homology"/>
<accession>Q5PNA5</accession>
<gene>
    <name evidence="1" type="primary">arnC</name>
    <name type="ordered locus">SPA0565</name>
</gene>
<keyword id="KW-0046">Antibiotic resistance</keyword>
<keyword id="KW-0997">Cell inner membrane</keyword>
<keyword id="KW-1003">Cell membrane</keyword>
<keyword id="KW-0328">Glycosyltransferase</keyword>
<keyword id="KW-0441">Lipid A biosynthesis</keyword>
<keyword id="KW-0444">Lipid biosynthesis</keyword>
<keyword id="KW-0443">Lipid metabolism</keyword>
<keyword id="KW-0448">Lipopolysaccharide biosynthesis</keyword>
<keyword id="KW-0472">Membrane</keyword>
<keyword id="KW-0808">Transferase</keyword>
<keyword id="KW-0812">Transmembrane</keyword>
<keyword id="KW-1133">Transmembrane helix</keyword>
<name>ARNC_SALPA</name>
<comment type="function">
    <text evidence="1">Catalyzes the transfer of 4-deoxy-4-formamido-L-arabinose from UDP to undecaprenyl phosphate. The modified arabinose is attached to lipid A and is required for resistance to polymyxin and cationic antimicrobial peptides.</text>
</comment>
<comment type="catalytic activity">
    <reaction evidence="1">
        <text>UDP-4-deoxy-4-formamido-beta-L-arabinose + di-trans,octa-cis-undecaprenyl phosphate = 4-deoxy-4-formamido-alpha-L-arabinopyranosyl di-trans,octa-cis-undecaprenyl phosphate + UDP</text>
        <dbReference type="Rhea" id="RHEA:27722"/>
        <dbReference type="ChEBI" id="CHEBI:58223"/>
        <dbReference type="ChEBI" id="CHEBI:58709"/>
        <dbReference type="ChEBI" id="CHEBI:58909"/>
        <dbReference type="ChEBI" id="CHEBI:60392"/>
        <dbReference type="EC" id="2.4.2.53"/>
    </reaction>
</comment>
<comment type="pathway">
    <text evidence="1">Glycolipid biosynthesis; 4-amino-4-deoxy-alpha-L-arabinose undecaprenyl phosphate biosynthesis; 4-amino-4-deoxy-alpha-L-arabinose undecaprenyl phosphate from UDP-4-deoxy-4-formamido-beta-L-arabinose and undecaprenyl phosphate: step 1/2.</text>
</comment>
<comment type="pathway">
    <text evidence="1">Bacterial outer membrane biogenesis; lipopolysaccharide biosynthesis.</text>
</comment>
<comment type="subcellular location">
    <subcellularLocation>
        <location evidence="1">Cell inner membrane</location>
        <topology evidence="1">Multi-pass membrane protein</topology>
    </subcellularLocation>
</comment>
<comment type="similarity">
    <text evidence="1">Belongs to the glycosyltransferase 2 family.</text>
</comment>
<protein>
    <recommendedName>
        <fullName evidence="1">Undecaprenyl-phosphate 4-deoxy-4-formamido-L-arabinose transferase</fullName>
        <ecNumber evidence="1">2.4.2.53</ecNumber>
    </recommendedName>
    <alternativeName>
        <fullName evidence="1">Undecaprenyl-phosphate Ara4FN transferase</fullName>
        <shortName evidence="1">Ara4FN transferase</shortName>
    </alternativeName>
</protein>
<sequence length="327" mass="36476">MFDAAPIKKVSVVIPVYNEQESLPELIRRTTAACESLGKAWEILLIDDGSSDSSAELMVKASQEADSHIISILLNRNYGQHAAIMAGFSHVSGDLIITLDADLQNPPEEIPRLVAKADEGFDVVGTVRQNRQDSLFRKSASKIINLLIQRTTGKAMGDYGCMLRAYRRPIIDTMLRCHERSTFIPILANIFARRATEIPVHHAEREFGDSKYSFMRLINLMYDLVTCLTTTPLRLLSLLGSVIAIGGFSLSVLLIVLRLALGPQWAAEGVFMLFAVLFTFIGAQFIGMGLLGEYIGRIYNDVRARPRYFVQQVIYPESTSFTEESHQ</sequence>
<evidence type="ECO:0000255" key="1">
    <source>
        <dbReference type="HAMAP-Rule" id="MF_01164"/>
    </source>
</evidence>
<organism>
    <name type="scientific">Salmonella paratyphi A (strain ATCC 9150 / SARB42)</name>
    <dbReference type="NCBI Taxonomy" id="295319"/>
    <lineage>
        <taxon>Bacteria</taxon>
        <taxon>Pseudomonadati</taxon>
        <taxon>Pseudomonadota</taxon>
        <taxon>Gammaproteobacteria</taxon>
        <taxon>Enterobacterales</taxon>
        <taxon>Enterobacteriaceae</taxon>
        <taxon>Salmonella</taxon>
    </lineage>
</organism>
<reference key="1">
    <citation type="journal article" date="2004" name="Nat. Genet.">
        <title>Comparison of genome degradation in Paratyphi A and Typhi, human-restricted serovars of Salmonella enterica that cause typhoid.</title>
        <authorList>
            <person name="McClelland M."/>
            <person name="Sanderson K.E."/>
            <person name="Clifton S.W."/>
            <person name="Latreille P."/>
            <person name="Porwollik S."/>
            <person name="Sabo A."/>
            <person name="Meyer R."/>
            <person name="Bieri T."/>
            <person name="Ozersky P."/>
            <person name="McLellan M."/>
            <person name="Harkins C.R."/>
            <person name="Wang C."/>
            <person name="Nguyen C."/>
            <person name="Berghoff A."/>
            <person name="Elliott G."/>
            <person name="Kohlberg S."/>
            <person name="Strong C."/>
            <person name="Du F."/>
            <person name="Carter J."/>
            <person name="Kremizki C."/>
            <person name="Layman D."/>
            <person name="Leonard S."/>
            <person name="Sun H."/>
            <person name="Fulton L."/>
            <person name="Nash W."/>
            <person name="Miner T."/>
            <person name="Minx P."/>
            <person name="Delehaunty K."/>
            <person name="Fronick C."/>
            <person name="Magrini V."/>
            <person name="Nhan M."/>
            <person name="Warren W."/>
            <person name="Florea L."/>
            <person name="Spieth J."/>
            <person name="Wilson R.K."/>
        </authorList>
    </citation>
    <scope>NUCLEOTIDE SEQUENCE [LARGE SCALE GENOMIC DNA]</scope>
    <source>
        <strain>ATCC 9150 / SARB42</strain>
    </source>
</reference>